<reference key="1">
    <citation type="journal article" date="2000" name="Nucleic Acids Res.">
        <title>Genome sequences of Chlamydia trachomatis MoPn and Chlamydia pneumoniae AR39.</title>
        <authorList>
            <person name="Read T.D."/>
            <person name="Brunham R.C."/>
            <person name="Shen C."/>
            <person name="Gill S.R."/>
            <person name="Heidelberg J.F."/>
            <person name="White O."/>
            <person name="Hickey E.K."/>
            <person name="Peterson J.D."/>
            <person name="Utterback T.R."/>
            <person name="Berry K.J."/>
            <person name="Bass S."/>
            <person name="Linher K.D."/>
            <person name="Weidman J.F."/>
            <person name="Khouri H.M."/>
            <person name="Craven B."/>
            <person name="Bowman C."/>
            <person name="Dodson R.J."/>
            <person name="Gwinn M.L."/>
            <person name="Nelson W.C."/>
            <person name="DeBoy R.T."/>
            <person name="Kolonay J.F."/>
            <person name="McClarty G."/>
            <person name="Salzberg S.L."/>
            <person name="Eisen J.A."/>
            <person name="Fraser C.M."/>
        </authorList>
    </citation>
    <scope>NUCLEOTIDE SEQUENCE [LARGE SCALE GENOMIC DNA]</scope>
    <source>
        <strain>MoPn / Nigg</strain>
    </source>
</reference>
<gene>
    <name evidence="1" type="primary">folD</name>
    <name type="ordered locus">TC_0350</name>
</gene>
<dbReference type="EC" id="1.5.1.5" evidence="1"/>
<dbReference type="EC" id="3.5.4.9" evidence="1"/>
<dbReference type="EMBL" id="AE002160">
    <property type="protein sequence ID" value="AAF39211.1"/>
    <property type="molecule type" value="Genomic_DNA"/>
</dbReference>
<dbReference type="PIR" id="F81713">
    <property type="entry name" value="F81713"/>
</dbReference>
<dbReference type="RefSeq" id="WP_010230231.1">
    <property type="nucleotide sequence ID" value="NZ_CP063055.1"/>
</dbReference>
<dbReference type="SMR" id="Q9PKW1"/>
<dbReference type="GeneID" id="1245703"/>
<dbReference type="KEGG" id="cmu:TC_0350"/>
<dbReference type="eggNOG" id="COG0190">
    <property type="taxonomic scope" value="Bacteria"/>
</dbReference>
<dbReference type="HOGENOM" id="CLU_034045_2_0_0"/>
<dbReference type="OrthoDB" id="9803580at2"/>
<dbReference type="UniPathway" id="UPA00193"/>
<dbReference type="Proteomes" id="UP000000800">
    <property type="component" value="Chromosome"/>
</dbReference>
<dbReference type="GO" id="GO:0005829">
    <property type="term" value="C:cytosol"/>
    <property type="evidence" value="ECO:0007669"/>
    <property type="project" value="TreeGrafter"/>
</dbReference>
<dbReference type="GO" id="GO:0004477">
    <property type="term" value="F:methenyltetrahydrofolate cyclohydrolase activity"/>
    <property type="evidence" value="ECO:0007669"/>
    <property type="project" value="UniProtKB-UniRule"/>
</dbReference>
<dbReference type="GO" id="GO:0004488">
    <property type="term" value="F:methylenetetrahydrofolate dehydrogenase (NADP+) activity"/>
    <property type="evidence" value="ECO:0007669"/>
    <property type="project" value="UniProtKB-UniRule"/>
</dbReference>
<dbReference type="GO" id="GO:0000105">
    <property type="term" value="P:L-histidine biosynthetic process"/>
    <property type="evidence" value="ECO:0007669"/>
    <property type="project" value="UniProtKB-KW"/>
</dbReference>
<dbReference type="GO" id="GO:0009086">
    <property type="term" value="P:methionine biosynthetic process"/>
    <property type="evidence" value="ECO:0007669"/>
    <property type="project" value="UniProtKB-KW"/>
</dbReference>
<dbReference type="GO" id="GO:0006164">
    <property type="term" value="P:purine nucleotide biosynthetic process"/>
    <property type="evidence" value="ECO:0007669"/>
    <property type="project" value="UniProtKB-KW"/>
</dbReference>
<dbReference type="GO" id="GO:0035999">
    <property type="term" value="P:tetrahydrofolate interconversion"/>
    <property type="evidence" value="ECO:0007669"/>
    <property type="project" value="UniProtKB-UniRule"/>
</dbReference>
<dbReference type="CDD" id="cd01080">
    <property type="entry name" value="NAD_bind_m-THF_DH_Cyclohyd"/>
    <property type="match status" value="1"/>
</dbReference>
<dbReference type="FunFam" id="3.40.50.720:FF:000189">
    <property type="entry name" value="Bifunctional protein FolD"/>
    <property type="match status" value="1"/>
</dbReference>
<dbReference type="FunFam" id="3.40.50.10860:FF:000005">
    <property type="entry name" value="C-1-tetrahydrofolate synthase, cytoplasmic, putative"/>
    <property type="match status" value="1"/>
</dbReference>
<dbReference type="Gene3D" id="3.40.50.10860">
    <property type="entry name" value="Leucine Dehydrogenase, chain A, domain 1"/>
    <property type="match status" value="1"/>
</dbReference>
<dbReference type="Gene3D" id="3.40.50.720">
    <property type="entry name" value="NAD(P)-binding Rossmann-like Domain"/>
    <property type="match status" value="1"/>
</dbReference>
<dbReference type="HAMAP" id="MF_01576">
    <property type="entry name" value="THF_DHG_CYH"/>
    <property type="match status" value="1"/>
</dbReference>
<dbReference type="InterPro" id="IPR046346">
    <property type="entry name" value="Aminoacid_DH-like_N_sf"/>
</dbReference>
<dbReference type="InterPro" id="IPR036291">
    <property type="entry name" value="NAD(P)-bd_dom_sf"/>
</dbReference>
<dbReference type="InterPro" id="IPR000672">
    <property type="entry name" value="THF_DH/CycHdrlase"/>
</dbReference>
<dbReference type="InterPro" id="IPR020630">
    <property type="entry name" value="THF_DH/CycHdrlase_cat_dom"/>
</dbReference>
<dbReference type="InterPro" id="IPR020867">
    <property type="entry name" value="THF_DH/CycHdrlase_CS"/>
</dbReference>
<dbReference type="InterPro" id="IPR020631">
    <property type="entry name" value="THF_DH/CycHdrlase_NAD-bd_dom"/>
</dbReference>
<dbReference type="NCBIfam" id="NF010778">
    <property type="entry name" value="PRK14181.1"/>
    <property type="match status" value="1"/>
</dbReference>
<dbReference type="PANTHER" id="PTHR48099:SF5">
    <property type="entry name" value="C-1-TETRAHYDROFOLATE SYNTHASE, CYTOPLASMIC"/>
    <property type="match status" value="1"/>
</dbReference>
<dbReference type="PANTHER" id="PTHR48099">
    <property type="entry name" value="C-1-TETRAHYDROFOLATE SYNTHASE, CYTOPLASMIC-RELATED"/>
    <property type="match status" value="1"/>
</dbReference>
<dbReference type="Pfam" id="PF00763">
    <property type="entry name" value="THF_DHG_CYH"/>
    <property type="match status" value="1"/>
</dbReference>
<dbReference type="Pfam" id="PF02882">
    <property type="entry name" value="THF_DHG_CYH_C"/>
    <property type="match status" value="1"/>
</dbReference>
<dbReference type="PRINTS" id="PR00085">
    <property type="entry name" value="THFDHDRGNASE"/>
</dbReference>
<dbReference type="SUPFAM" id="SSF53223">
    <property type="entry name" value="Aminoacid dehydrogenase-like, N-terminal domain"/>
    <property type="match status" value="1"/>
</dbReference>
<dbReference type="SUPFAM" id="SSF51735">
    <property type="entry name" value="NAD(P)-binding Rossmann-fold domains"/>
    <property type="match status" value="1"/>
</dbReference>
<dbReference type="PROSITE" id="PS00766">
    <property type="entry name" value="THF_DHG_CYH_1"/>
    <property type="match status" value="1"/>
</dbReference>
<dbReference type="PROSITE" id="PS00767">
    <property type="entry name" value="THF_DHG_CYH_2"/>
    <property type="match status" value="1"/>
</dbReference>
<accession>Q9PKW1</accession>
<evidence type="ECO:0000255" key="1">
    <source>
        <dbReference type="HAMAP-Rule" id="MF_01576"/>
    </source>
</evidence>
<sequence>MLLKGAPAADGILATVKDNIRSQSGSPGLAVVLIGNNPASEIYVNMKVKRARDLGMISRSYRKPSDATLSDILSLIHELNCDENIHGVLVQLPLPKHLDTQTILSSISPNKDVDGLHPVNMGKLLLGETDGFIPCTPSGIVELFKYYEIPLYGKHVVILGRSNIVGKPLSALLMQKHADTNASVTVLHSQSEHLKEITKTADILVSAIGVPLFVTKEMISEKCIVIDVGTSRVPADNPKGYSLVGDVDFNNVVPVCQAITPVPGGVGPMTVAMLMRNTWESFLRHTL</sequence>
<feature type="chain" id="PRO_0000199303" description="Bifunctional protein FolD">
    <location>
        <begin position="1"/>
        <end position="287"/>
    </location>
</feature>
<feature type="binding site" evidence="1">
    <location>
        <begin position="160"/>
        <end position="162"/>
    </location>
    <ligand>
        <name>NADP(+)</name>
        <dbReference type="ChEBI" id="CHEBI:58349"/>
    </ligand>
</feature>
<feature type="binding site" evidence="1">
    <location>
        <position position="189"/>
    </location>
    <ligand>
        <name>NADP(+)</name>
        <dbReference type="ChEBI" id="CHEBI:58349"/>
    </ligand>
</feature>
<feature type="binding site" evidence="1">
    <location>
        <position position="230"/>
    </location>
    <ligand>
        <name>NADP(+)</name>
        <dbReference type="ChEBI" id="CHEBI:58349"/>
    </ligand>
</feature>
<comment type="function">
    <text evidence="1">Catalyzes the oxidation of 5,10-methylenetetrahydrofolate to 5,10-methenyltetrahydrofolate and then the hydrolysis of 5,10-methenyltetrahydrofolate to 10-formyltetrahydrofolate.</text>
</comment>
<comment type="catalytic activity">
    <reaction evidence="1">
        <text>(6R)-5,10-methylene-5,6,7,8-tetrahydrofolate + NADP(+) = (6R)-5,10-methenyltetrahydrofolate + NADPH</text>
        <dbReference type="Rhea" id="RHEA:22812"/>
        <dbReference type="ChEBI" id="CHEBI:15636"/>
        <dbReference type="ChEBI" id="CHEBI:57455"/>
        <dbReference type="ChEBI" id="CHEBI:57783"/>
        <dbReference type="ChEBI" id="CHEBI:58349"/>
        <dbReference type="EC" id="1.5.1.5"/>
    </reaction>
</comment>
<comment type="catalytic activity">
    <reaction evidence="1">
        <text>(6R)-5,10-methenyltetrahydrofolate + H2O = (6R)-10-formyltetrahydrofolate + H(+)</text>
        <dbReference type="Rhea" id="RHEA:23700"/>
        <dbReference type="ChEBI" id="CHEBI:15377"/>
        <dbReference type="ChEBI" id="CHEBI:15378"/>
        <dbReference type="ChEBI" id="CHEBI:57455"/>
        <dbReference type="ChEBI" id="CHEBI:195366"/>
        <dbReference type="EC" id="3.5.4.9"/>
    </reaction>
</comment>
<comment type="pathway">
    <text evidence="1">One-carbon metabolism; tetrahydrofolate interconversion.</text>
</comment>
<comment type="subunit">
    <text evidence="1">Homodimer.</text>
</comment>
<comment type="similarity">
    <text evidence="1">Belongs to the tetrahydrofolate dehydrogenase/cyclohydrolase family.</text>
</comment>
<organism>
    <name type="scientific">Chlamydia muridarum (strain MoPn / Nigg)</name>
    <dbReference type="NCBI Taxonomy" id="243161"/>
    <lineage>
        <taxon>Bacteria</taxon>
        <taxon>Pseudomonadati</taxon>
        <taxon>Chlamydiota</taxon>
        <taxon>Chlamydiia</taxon>
        <taxon>Chlamydiales</taxon>
        <taxon>Chlamydiaceae</taxon>
        <taxon>Chlamydia/Chlamydophila group</taxon>
        <taxon>Chlamydia</taxon>
    </lineage>
</organism>
<name>FOLD_CHLMU</name>
<keyword id="KW-0028">Amino-acid biosynthesis</keyword>
<keyword id="KW-0368">Histidine biosynthesis</keyword>
<keyword id="KW-0378">Hydrolase</keyword>
<keyword id="KW-0486">Methionine biosynthesis</keyword>
<keyword id="KW-0511">Multifunctional enzyme</keyword>
<keyword id="KW-0521">NADP</keyword>
<keyword id="KW-0554">One-carbon metabolism</keyword>
<keyword id="KW-0560">Oxidoreductase</keyword>
<keyword id="KW-0658">Purine biosynthesis</keyword>
<protein>
    <recommendedName>
        <fullName evidence="1">Bifunctional protein FolD</fullName>
    </recommendedName>
    <domain>
        <recommendedName>
            <fullName evidence="1">Methylenetetrahydrofolate dehydrogenase</fullName>
            <ecNumber evidence="1">1.5.1.5</ecNumber>
        </recommendedName>
    </domain>
    <domain>
        <recommendedName>
            <fullName evidence="1">Methenyltetrahydrofolate cyclohydrolase</fullName>
            <ecNumber evidence="1">3.5.4.9</ecNumber>
        </recommendedName>
    </domain>
</protein>
<proteinExistence type="inferred from homology"/>